<dbReference type="EMBL" id="AJ720385">
    <property type="protein sequence ID" value="CAG32044.1"/>
    <property type="molecule type" value="mRNA"/>
</dbReference>
<dbReference type="RefSeq" id="NP_989801.2">
    <property type="nucleotide sequence ID" value="NM_204470.2"/>
</dbReference>
<dbReference type="SMR" id="Q5ZJP9"/>
<dbReference type="FunCoup" id="Q5ZJP9">
    <property type="interactions" value="2864"/>
</dbReference>
<dbReference type="STRING" id="9031.ENSGALP00000002355"/>
<dbReference type="PaxDb" id="9031-ENSGALP00000002355"/>
<dbReference type="GeneID" id="395124"/>
<dbReference type="KEGG" id="gga:395124"/>
<dbReference type="CTD" id="81669"/>
<dbReference type="VEuPathDB" id="HostDB:geneid_395124"/>
<dbReference type="eggNOG" id="KOG0835">
    <property type="taxonomic scope" value="Eukaryota"/>
</dbReference>
<dbReference type="InParanoid" id="Q5ZJP9"/>
<dbReference type="OrthoDB" id="10264655at2759"/>
<dbReference type="PhylomeDB" id="Q5ZJP9"/>
<dbReference type="PRO" id="PR:Q5ZJP9"/>
<dbReference type="Proteomes" id="UP000000539">
    <property type="component" value="Unassembled WGS sequence"/>
</dbReference>
<dbReference type="GO" id="GO:0016607">
    <property type="term" value="C:nuclear speck"/>
    <property type="evidence" value="ECO:0007669"/>
    <property type="project" value="UniProtKB-SubCell"/>
</dbReference>
<dbReference type="GO" id="GO:0005634">
    <property type="term" value="C:nucleus"/>
    <property type="evidence" value="ECO:0000318"/>
    <property type="project" value="GO_Central"/>
</dbReference>
<dbReference type="GO" id="GO:0016538">
    <property type="term" value="F:cyclin-dependent protein serine/threonine kinase regulator activity"/>
    <property type="evidence" value="ECO:0000318"/>
    <property type="project" value="GO_Central"/>
</dbReference>
<dbReference type="GO" id="GO:0006357">
    <property type="term" value="P:regulation of transcription by RNA polymerase II"/>
    <property type="evidence" value="ECO:0007669"/>
    <property type="project" value="InterPro"/>
</dbReference>
<dbReference type="CDD" id="cd20590">
    <property type="entry name" value="CYCLIN_CCNL2_rpt1"/>
    <property type="match status" value="1"/>
</dbReference>
<dbReference type="CDD" id="cd20593">
    <property type="entry name" value="CYCLIN_CCNL2_rpt2"/>
    <property type="match status" value="1"/>
</dbReference>
<dbReference type="FunFam" id="1.10.472.10:FF:000014">
    <property type="entry name" value="cyclin-L1 isoform X1"/>
    <property type="match status" value="1"/>
</dbReference>
<dbReference type="FunFam" id="1.10.472.10:FF:000016">
    <property type="entry name" value="cyclin-L1 isoform X1"/>
    <property type="match status" value="1"/>
</dbReference>
<dbReference type="Gene3D" id="1.10.472.10">
    <property type="entry name" value="Cyclin-like"/>
    <property type="match status" value="2"/>
</dbReference>
<dbReference type="InterPro" id="IPR013763">
    <property type="entry name" value="Cyclin-like_dom"/>
</dbReference>
<dbReference type="InterPro" id="IPR036915">
    <property type="entry name" value="Cyclin-like_sf"/>
</dbReference>
<dbReference type="InterPro" id="IPR043198">
    <property type="entry name" value="Cyclin/Ssn8"/>
</dbReference>
<dbReference type="InterPro" id="IPR004367">
    <property type="entry name" value="Cyclin_C-dom"/>
</dbReference>
<dbReference type="InterPro" id="IPR006671">
    <property type="entry name" value="Cyclin_N"/>
</dbReference>
<dbReference type="PANTHER" id="PTHR10026">
    <property type="entry name" value="CYCLIN"/>
    <property type="match status" value="1"/>
</dbReference>
<dbReference type="Pfam" id="PF02984">
    <property type="entry name" value="Cyclin_C"/>
    <property type="match status" value="1"/>
</dbReference>
<dbReference type="Pfam" id="PF00134">
    <property type="entry name" value="Cyclin_N"/>
    <property type="match status" value="1"/>
</dbReference>
<dbReference type="PIRSF" id="PIRSF036580">
    <property type="entry name" value="Cyclin_L"/>
    <property type="match status" value="1"/>
</dbReference>
<dbReference type="SMART" id="SM00385">
    <property type="entry name" value="CYCLIN"/>
    <property type="match status" value="2"/>
</dbReference>
<dbReference type="SMART" id="SM01332">
    <property type="entry name" value="Cyclin_C"/>
    <property type="match status" value="1"/>
</dbReference>
<dbReference type="SUPFAM" id="SSF47954">
    <property type="entry name" value="Cyclin-like"/>
    <property type="match status" value="2"/>
</dbReference>
<proteinExistence type="evidence at transcript level"/>
<keyword id="KW-0195">Cyclin</keyword>
<keyword id="KW-0539">Nucleus</keyword>
<keyword id="KW-1185">Reference proteome</keyword>
<keyword id="KW-0677">Repeat</keyword>
<keyword id="KW-0804">Transcription</keyword>
<keyword id="KW-0805">Transcription regulation</keyword>
<organism>
    <name type="scientific">Gallus gallus</name>
    <name type="common">Chicken</name>
    <dbReference type="NCBI Taxonomy" id="9031"/>
    <lineage>
        <taxon>Eukaryota</taxon>
        <taxon>Metazoa</taxon>
        <taxon>Chordata</taxon>
        <taxon>Craniata</taxon>
        <taxon>Vertebrata</taxon>
        <taxon>Euteleostomi</taxon>
        <taxon>Archelosauria</taxon>
        <taxon>Archosauria</taxon>
        <taxon>Dinosauria</taxon>
        <taxon>Saurischia</taxon>
        <taxon>Theropoda</taxon>
        <taxon>Coelurosauria</taxon>
        <taxon>Aves</taxon>
        <taxon>Neognathae</taxon>
        <taxon>Galloanserae</taxon>
        <taxon>Galliformes</taxon>
        <taxon>Phasianidae</taxon>
        <taxon>Phasianinae</taxon>
        <taxon>Gallus</taxon>
    </lineage>
</organism>
<name>CCNL1_CHICK</name>
<feature type="chain" id="PRO_0000080484" description="Cyclin-L1">
    <location>
        <begin position="1"/>
        <end position="534"/>
    </location>
</feature>
<feature type="region of interest" description="Cyclin-like 1">
    <location>
        <begin position="94"/>
        <end position="196"/>
    </location>
</feature>
<feature type="region of interest" description="Cyclin-like 2">
    <location>
        <begin position="209"/>
        <end position="293"/>
    </location>
</feature>
<feature type="region of interest" description="Disordered" evidence="3">
    <location>
        <begin position="327"/>
        <end position="534"/>
    </location>
</feature>
<feature type="region of interest" description="RS">
    <location>
        <begin position="400"/>
        <end position="436"/>
    </location>
</feature>
<feature type="compositionally biased region" description="Basic and acidic residues" evidence="3">
    <location>
        <begin position="389"/>
        <end position="399"/>
    </location>
</feature>
<feature type="compositionally biased region" description="Low complexity" evidence="3">
    <location>
        <begin position="400"/>
        <end position="412"/>
    </location>
</feature>
<feature type="compositionally biased region" description="Low complexity" evidence="3">
    <location>
        <begin position="437"/>
        <end position="453"/>
    </location>
</feature>
<feature type="compositionally biased region" description="Basic residues" evidence="3">
    <location>
        <begin position="468"/>
        <end position="485"/>
    </location>
</feature>
<feature type="compositionally biased region" description="Basic and acidic residues" evidence="3">
    <location>
        <begin position="486"/>
        <end position="495"/>
    </location>
</feature>
<feature type="compositionally biased region" description="Basic residues" evidence="3">
    <location>
        <begin position="496"/>
        <end position="511"/>
    </location>
</feature>
<feature type="compositionally biased region" description="Basic and acidic residues" evidence="3">
    <location>
        <begin position="512"/>
        <end position="528"/>
    </location>
</feature>
<reference key="1">
    <citation type="journal article" date="2005" name="Genome Biol.">
        <title>Full-length cDNAs from chicken bursal lymphocytes to facilitate gene function analysis.</title>
        <authorList>
            <person name="Caldwell R.B."/>
            <person name="Kierzek A.M."/>
            <person name="Arakawa H."/>
            <person name="Bezzubov Y."/>
            <person name="Zaim J."/>
            <person name="Fiedler P."/>
            <person name="Kutter S."/>
            <person name="Blagodatski A."/>
            <person name="Kostovska D."/>
            <person name="Koter M."/>
            <person name="Plachy J."/>
            <person name="Carninci P."/>
            <person name="Hayashizaki Y."/>
            <person name="Buerstedde J.-M."/>
        </authorList>
    </citation>
    <scope>NUCLEOTIDE SEQUENCE [LARGE SCALE MRNA]</scope>
    <source>
        <strain>CB</strain>
        <tissue>Bursa of Fabricius</tissue>
    </source>
</reference>
<comment type="function">
    <text evidence="2">Involved in pre-mRNA splicing.</text>
</comment>
<comment type="subcellular location">
    <subcellularLocation>
        <location evidence="2">Nucleus speckle</location>
    </subcellularLocation>
    <subcellularLocation>
        <location evidence="2">Nucleus</location>
        <location evidence="2">Nucleoplasm</location>
    </subcellularLocation>
    <text evidence="2">Found in nuclear intrachromatin granules clusters (IGC), also called nuclear speckles, which are storage compartments for nuclear proteins involved in mRNA processing.</text>
</comment>
<comment type="domain">
    <text evidence="1">Contains a RS region (arginine-serine dipeptide repeat) within the C-terminal domain which is the hallmark of the SR family of splicing factors. This region probably plays a role in protein-protein interactions (By similarity).</text>
</comment>
<comment type="similarity">
    <text evidence="4">Belongs to the cyclin family. Cyclin L subfamily.</text>
</comment>
<protein>
    <recommendedName>
        <fullName>Cyclin-L1</fullName>
    </recommendedName>
</protein>
<accession>Q5ZJP9</accession>
<gene>
    <name type="primary">CCNL1</name>
    <name type="ORF">RCJMB04_16i10</name>
</gene>
<sequence>MAAGSGSAAAVAAVAGGGPAGPHAAGVTAGAVTTGSGAPVPGPGAVLIGDRLYSGVLITLENCLLPEHTLRFTPSMSSGLDPDTETELRVTGCELIQAAGILLRLPQVAMATGQVLFQRFFYTKSFVKHSMEHVSMACVHLASKIEEAPRRIRDVINVFHRLRHLREKKKPVPLILDQEYVNLKNQIIKAERRVLKELGFCVHVKHPHKIIVMYLQVLECERNQHLVQTSWNYMNDSLRTDVFVRFQPESIACACIYLAARTLEIPLPNRPHWFLLFGTTEEEIQEICLKILQLYTRKKVDLSDLESKIEKKKLAIEEAKAQAKGLLPEGAPVLDNTSGFSPLPKNESPKEVKGNKPSPLPVQAMKNAKRKAEGAKRTGSNSPVNGVQKGRESRSRSGSRDQSYSRSPSRSASPKHRKSESYSTSSGSKSHSRSRSRSGSPPRQFNHSSTYKSSKMRSYKKSKDYKYSAHKARKSRSRSSSRSRSRSRERSDHSGKYKKKSHYYRNHRHERSRSYERASHRYDRDHPGHSRHRR</sequence>
<evidence type="ECO:0000250" key="1"/>
<evidence type="ECO:0000250" key="2">
    <source>
        <dbReference type="UniProtKB" id="Q9UK58"/>
    </source>
</evidence>
<evidence type="ECO:0000256" key="3">
    <source>
        <dbReference type="SAM" id="MobiDB-lite"/>
    </source>
</evidence>
<evidence type="ECO:0000305" key="4"/>